<protein>
    <recommendedName>
        <fullName evidence="1">1-deoxy-D-xylulose 5-phosphate reductoisomerase</fullName>
        <shortName evidence="1">DXP reductoisomerase</shortName>
        <ecNumber evidence="1">1.1.1.267</ecNumber>
    </recommendedName>
    <alternativeName>
        <fullName evidence="1">1-deoxyxylulose-5-phosphate reductoisomerase</fullName>
    </alternativeName>
    <alternativeName>
        <fullName evidence="1">2-C-methyl-D-erythritol 4-phosphate synthase</fullName>
    </alternativeName>
</protein>
<dbReference type="EC" id="1.1.1.267" evidence="1"/>
<dbReference type="EMBL" id="CP000859">
    <property type="protein sequence ID" value="ABW66290.1"/>
    <property type="molecule type" value="Genomic_DNA"/>
</dbReference>
<dbReference type="RefSeq" id="WP_012173909.1">
    <property type="nucleotide sequence ID" value="NC_009943.1"/>
</dbReference>
<dbReference type="SMR" id="A8ZTM6"/>
<dbReference type="STRING" id="96561.Dole_0480"/>
<dbReference type="KEGG" id="dol:Dole_0480"/>
<dbReference type="eggNOG" id="COG0743">
    <property type="taxonomic scope" value="Bacteria"/>
</dbReference>
<dbReference type="HOGENOM" id="CLU_035714_4_0_7"/>
<dbReference type="OrthoDB" id="9806546at2"/>
<dbReference type="UniPathway" id="UPA00056">
    <property type="reaction ID" value="UER00092"/>
</dbReference>
<dbReference type="Proteomes" id="UP000008561">
    <property type="component" value="Chromosome"/>
</dbReference>
<dbReference type="GO" id="GO:0030604">
    <property type="term" value="F:1-deoxy-D-xylulose-5-phosphate reductoisomerase activity"/>
    <property type="evidence" value="ECO:0007669"/>
    <property type="project" value="UniProtKB-UniRule"/>
</dbReference>
<dbReference type="GO" id="GO:0030145">
    <property type="term" value="F:manganese ion binding"/>
    <property type="evidence" value="ECO:0007669"/>
    <property type="project" value="TreeGrafter"/>
</dbReference>
<dbReference type="GO" id="GO:0070402">
    <property type="term" value="F:NADPH binding"/>
    <property type="evidence" value="ECO:0007669"/>
    <property type="project" value="InterPro"/>
</dbReference>
<dbReference type="GO" id="GO:0051484">
    <property type="term" value="P:isopentenyl diphosphate biosynthetic process, methylerythritol 4-phosphate pathway involved in terpenoid biosynthetic process"/>
    <property type="evidence" value="ECO:0007669"/>
    <property type="project" value="TreeGrafter"/>
</dbReference>
<dbReference type="FunFam" id="3.40.50.720:FF:000045">
    <property type="entry name" value="1-deoxy-D-xylulose 5-phosphate reductoisomerase"/>
    <property type="match status" value="1"/>
</dbReference>
<dbReference type="Gene3D" id="1.10.1740.10">
    <property type="match status" value="1"/>
</dbReference>
<dbReference type="Gene3D" id="3.40.50.720">
    <property type="entry name" value="NAD(P)-binding Rossmann-like Domain"/>
    <property type="match status" value="1"/>
</dbReference>
<dbReference type="HAMAP" id="MF_00183">
    <property type="entry name" value="DXP_reductoisom"/>
    <property type="match status" value="1"/>
</dbReference>
<dbReference type="InterPro" id="IPR003821">
    <property type="entry name" value="DXP_reductoisomerase"/>
</dbReference>
<dbReference type="InterPro" id="IPR013644">
    <property type="entry name" value="DXP_reductoisomerase_C"/>
</dbReference>
<dbReference type="InterPro" id="IPR013512">
    <property type="entry name" value="DXP_reductoisomerase_N"/>
</dbReference>
<dbReference type="InterPro" id="IPR026877">
    <property type="entry name" value="DXPR_C"/>
</dbReference>
<dbReference type="InterPro" id="IPR036169">
    <property type="entry name" value="DXPR_C_sf"/>
</dbReference>
<dbReference type="InterPro" id="IPR036291">
    <property type="entry name" value="NAD(P)-bd_dom_sf"/>
</dbReference>
<dbReference type="NCBIfam" id="TIGR00243">
    <property type="entry name" value="Dxr"/>
    <property type="match status" value="1"/>
</dbReference>
<dbReference type="NCBIfam" id="NF009114">
    <property type="entry name" value="PRK12464.1"/>
    <property type="match status" value="1"/>
</dbReference>
<dbReference type="PANTHER" id="PTHR30525">
    <property type="entry name" value="1-DEOXY-D-XYLULOSE 5-PHOSPHATE REDUCTOISOMERASE"/>
    <property type="match status" value="1"/>
</dbReference>
<dbReference type="PANTHER" id="PTHR30525:SF0">
    <property type="entry name" value="1-DEOXY-D-XYLULOSE 5-PHOSPHATE REDUCTOISOMERASE, CHLOROPLASTIC"/>
    <property type="match status" value="1"/>
</dbReference>
<dbReference type="Pfam" id="PF08436">
    <property type="entry name" value="DXP_redisom_C"/>
    <property type="match status" value="1"/>
</dbReference>
<dbReference type="Pfam" id="PF02670">
    <property type="entry name" value="DXP_reductoisom"/>
    <property type="match status" value="1"/>
</dbReference>
<dbReference type="Pfam" id="PF13288">
    <property type="entry name" value="DXPR_C"/>
    <property type="match status" value="1"/>
</dbReference>
<dbReference type="PIRSF" id="PIRSF006205">
    <property type="entry name" value="Dxp_reductismrs"/>
    <property type="match status" value="1"/>
</dbReference>
<dbReference type="SUPFAM" id="SSF69055">
    <property type="entry name" value="1-deoxy-D-xylulose-5-phosphate reductoisomerase, C-terminal domain"/>
    <property type="match status" value="1"/>
</dbReference>
<dbReference type="SUPFAM" id="SSF55347">
    <property type="entry name" value="Glyceraldehyde-3-phosphate dehydrogenase-like, C-terminal domain"/>
    <property type="match status" value="1"/>
</dbReference>
<dbReference type="SUPFAM" id="SSF51735">
    <property type="entry name" value="NAD(P)-binding Rossmann-fold domains"/>
    <property type="match status" value="1"/>
</dbReference>
<keyword id="KW-0414">Isoprene biosynthesis</keyword>
<keyword id="KW-0464">Manganese</keyword>
<keyword id="KW-0479">Metal-binding</keyword>
<keyword id="KW-0521">NADP</keyword>
<keyword id="KW-0560">Oxidoreductase</keyword>
<keyword id="KW-1185">Reference proteome</keyword>
<evidence type="ECO:0000255" key="1">
    <source>
        <dbReference type="HAMAP-Rule" id="MF_00183"/>
    </source>
</evidence>
<accession>A8ZTM6</accession>
<comment type="function">
    <text evidence="1">Catalyzes the NADPH-dependent rearrangement and reduction of 1-deoxy-D-xylulose-5-phosphate (DXP) to 2-C-methyl-D-erythritol 4-phosphate (MEP).</text>
</comment>
<comment type="catalytic activity">
    <reaction evidence="1">
        <text>2-C-methyl-D-erythritol 4-phosphate + NADP(+) = 1-deoxy-D-xylulose 5-phosphate + NADPH + H(+)</text>
        <dbReference type="Rhea" id="RHEA:13717"/>
        <dbReference type="ChEBI" id="CHEBI:15378"/>
        <dbReference type="ChEBI" id="CHEBI:57783"/>
        <dbReference type="ChEBI" id="CHEBI:57792"/>
        <dbReference type="ChEBI" id="CHEBI:58262"/>
        <dbReference type="ChEBI" id="CHEBI:58349"/>
        <dbReference type="EC" id="1.1.1.267"/>
    </reaction>
    <physiologicalReaction direction="right-to-left" evidence="1">
        <dbReference type="Rhea" id="RHEA:13719"/>
    </physiologicalReaction>
</comment>
<comment type="cofactor">
    <cofactor evidence="1">
        <name>Mg(2+)</name>
        <dbReference type="ChEBI" id="CHEBI:18420"/>
    </cofactor>
    <cofactor evidence="1">
        <name>Mn(2+)</name>
        <dbReference type="ChEBI" id="CHEBI:29035"/>
    </cofactor>
</comment>
<comment type="pathway">
    <text evidence="1">Isoprenoid biosynthesis; isopentenyl diphosphate biosynthesis via DXP pathway; isopentenyl diphosphate from 1-deoxy-D-xylulose 5-phosphate: step 1/6.</text>
</comment>
<comment type="similarity">
    <text evidence="1">Belongs to the DXR family.</text>
</comment>
<reference key="1">
    <citation type="submission" date="2007-10" db="EMBL/GenBank/DDBJ databases">
        <title>Complete sequence of Desulfococcus oleovorans Hxd3.</title>
        <authorList>
            <consortium name="US DOE Joint Genome Institute"/>
            <person name="Copeland A."/>
            <person name="Lucas S."/>
            <person name="Lapidus A."/>
            <person name="Barry K."/>
            <person name="Glavina del Rio T."/>
            <person name="Dalin E."/>
            <person name="Tice H."/>
            <person name="Pitluck S."/>
            <person name="Kiss H."/>
            <person name="Brettin T."/>
            <person name="Bruce D."/>
            <person name="Detter J.C."/>
            <person name="Han C."/>
            <person name="Schmutz J."/>
            <person name="Larimer F."/>
            <person name="Land M."/>
            <person name="Hauser L."/>
            <person name="Kyrpides N."/>
            <person name="Kim E."/>
            <person name="Wawrik B."/>
            <person name="Richardson P."/>
        </authorList>
    </citation>
    <scope>NUCLEOTIDE SEQUENCE [LARGE SCALE GENOMIC DNA]</scope>
    <source>
        <strain>DSM 6200 / JCM 39069 / Hxd3</strain>
    </source>
</reference>
<name>DXR_DESOH</name>
<organism>
    <name type="scientific">Desulfosudis oleivorans (strain DSM 6200 / JCM 39069 / Hxd3)</name>
    <name type="common">Desulfococcus oleovorans</name>
    <dbReference type="NCBI Taxonomy" id="96561"/>
    <lineage>
        <taxon>Bacteria</taxon>
        <taxon>Pseudomonadati</taxon>
        <taxon>Thermodesulfobacteriota</taxon>
        <taxon>Desulfobacteria</taxon>
        <taxon>Desulfobacterales</taxon>
        <taxon>Desulfosudaceae</taxon>
        <taxon>Desulfosudis</taxon>
    </lineage>
</organism>
<gene>
    <name evidence="1" type="primary">dxr</name>
    <name type="ordered locus">Dole_0480</name>
</gene>
<sequence length="383" mass="40863">MKRLTLLGSTGSIGVNTLKVVSRFCDRFSVEALCARGSVDTLAEQVQRFSPSLAVVIDAPTAQALKERLPAGSRTEVLFGEAGYCHAVSLPGVDMVVSAMVGAAGLGPTIAAIKAGKAVALANKEVLVMAGETVMALAAQKGVPLLPIDSEHSAIFQCLQGNDKTFLSKIHLTASGGPFLNKTRQEIETATPEQALAHPTWTMGKKISIDSATLMNKGLEVIEARFLFDVPADCIEVVVHPQSIIHSMVSYIDGSMMAQLSVPDMKGAIAYALSYPERLDLNQPAPDLAALEQLTFFSPDLDRFPCLGLAFEACRRKKTFPAVLNAANEVAVDAFLREAIPFGRIPRVIEQVLAEHTGVTDPSLSDIKDADAWARQRAGALLP</sequence>
<proteinExistence type="inferred from homology"/>
<feature type="chain" id="PRO_1000098492" description="1-deoxy-D-xylulose 5-phosphate reductoisomerase">
    <location>
        <begin position="1"/>
        <end position="383"/>
    </location>
</feature>
<feature type="binding site" evidence="1">
    <location>
        <position position="10"/>
    </location>
    <ligand>
        <name>NADPH</name>
        <dbReference type="ChEBI" id="CHEBI:57783"/>
    </ligand>
</feature>
<feature type="binding site" evidence="1">
    <location>
        <position position="11"/>
    </location>
    <ligand>
        <name>NADPH</name>
        <dbReference type="ChEBI" id="CHEBI:57783"/>
    </ligand>
</feature>
<feature type="binding site" evidence="1">
    <location>
        <position position="12"/>
    </location>
    <ligand>
        <name>NADPH</name>
        <dbReference type="ChEBI" id="CHEBI:57783"/>
    </ligand>
</feature>
<feature type="binding site" evidence="1">
    <location>
        <position position="13"/>
    </location>
    <ligand>
        <name>NADPH</name>
        <dbReference type="ChEBI" id="CHEBI:57783"/>
    </ligand>
</feature>
<feature type="binding site" evidence="1">
    <location>
        <position position="123"/>
    </location>
    <ligand>
        <name>NADPH</name>
        <dbReference type="ChEBI" id="CHEBI:57783"/>
    </ligand>
</feature>
<feature type="binding site" evidence="1">
    <location>
        <position position="124"/>
    </location>
    <ligand>
        <name>1-deoxy-D-xylulose 5-phosphate</name>
        <dbReference type="ChEBI" id="CHEBI:57792"/>
    </ligand>
</feature>
<feature type="binding site" evidence="1">
    <location>
        <position position="125"/>
    </location>
    <ligand>
        <name>NADPH</name>
        <dbReference type="ChEBI" id="CHEBI:57783"/>
    </ligand>
</feature>
<feature type="binding site" evidence="1">
    <location>
        <position position="149"/>
    </location>
    <ligand>
        <name>Mn(2+)</name>
        <dbReference type="ChEBI" id="CHEBI:29035"/>
    </ligand>
</feature>
<feature type="binding site" evidence="1">
    <location>
        <position position="150"/>
    </location>
    <ligand>
        <name>1-deoxy-D-xylulose 5-phosphate</name>
        <dbReference type="ChEBI" id="CHEBI:57792"/>
    </ligand>
</feature>
<feature type="binding site" evidence="1">
    <location>
        <position position="151"/>
    </location>
    <ligand>
        <name>1-deoxy-D-xylulose 5-phosphate</name>
        <dbReference type="ChEBI" id="CHEBI:57792"/>
    </ligand>
</feature>
<feature type="binding site" evidence="1">
    <location>
        <position position="151"/>
    </location>
    <ligand>
        <name>Mn(2+)</name>
        <dbReference type="ChEBI" id="CHEBI:29035"/>
    </ligand>
</feature>
<feature type="binding site" evidence="1">
    <location>
        <position position="175"/>
    </location>
    <ligand>
        <name>1-deoxy-D-xylulose 5-phosphate</name>
        <dbReference type="ChEBI" id="CHEBI:57792"/>
    </ligand>
</feature>
<feature type="binding site" evidence="1">
    <location>
        <position position="198"/>
    </location>
    <ligand>
        <name>1-deoxy-D-xylulose 5-phosphate</name>
        <dbReference type="ChEBI" id="CHEBI:57792"/>
    </ligand>
</feature>
<feature type="binding site" evidence="1">
    <location>
        <position position="204"/>
    </location>
    <ligand>
        <name>NADPH</name>
        <dbReference type="ChEBI" id="CHEBI:57783"/>
    </ligand>
</feature>
<feature type="binding site" evidence="1">
    <location>
        <position position="211"/>
    </location>
    <ligand>
        <name>1-deoxy-D-xylulose 5-phosphate</name>
        <dbReference type="ChEBI" id="CHEBI:57792"/>
    </ligand>
</feature>
<feature type="binding site" evidence="1">
    <location>
        <position position="216"/>
    </location>
    <ligand>
        <name>1-deoxy-D-xylulose 5-phosphate</name>
        <dbReference type="ChEBI" id="CHEBI:57792"/>
    </ligand>
</feature>
<feature type="binding site" evidence="1">
    <location>
        <position position="217"/>
    </location>
    <ligand>
        <name>1-deoxy-D-xylulose 5-phosphate</name>
        <dbReference type="ChEBI" id="CHEBI:57792"/>
    </ligand>
</feature>
<feature type="binding site" evidence="1">
    <location>
        <position position="220"/>
    </location>
    <ligand>
        <name>1-deoxy-D-xylulose 5-phosphate</name>
        <dbReference type="ChEBI" id="CHEBI:57792"/>
    </ligand>
</feature>
<feature type="binding site" evidence="1">
    <location>
        <position position="220"/>
    </location>
    <ligand>
        <name>Mn(2+)</name>
        <dbReference type="ChEBI" id="CHEBI:29035"/>
    </ligand>
</feature>